<feature type="chain" id="PRO_1000120705" description="Small ribosomal subunit protein bS6">
    <location>
        <begin position="1"/>
        <end position="96"/>
    </location>
</feature>
<comment type="function">
    <text evidence="1">Binds together with bS18 to 16S ribosomal RNA.</text>
</comment>
<comment type="similarity">
    <text evidence="1">Belongs to the bacterial ribosomal protein bS6 family.</text>
</comment>
<sequence length="96" mass="11285">MRKYEIMYIIRPGVEEEAQKALVERFAGVLTNNGAEIINTKEWGKRRLAYEINDLREGFYMILNVNSNAEAINEFDRLAKINEDILRHIVVKEEEK</sequence>
<organism>
    <name type="scientific">Bacillus cereus (strain G9842)</name>
    <dbReference type="NCBI Taxonomy" id="405531"/>
    <lineage>
        <taxon>Bacteria</taxon>
        <taxon>Bacillati</taxon>
        <taxon>Bacillota</taxon>
        <taxon>Bacilli</taxon>
        <taxon>Bacillales</taxon>
        <taxon>Bacillaceae</taxon>
        <taxon>Bacillus</taxon>
        <taxon>Bacillus cereus group</taxon>
    </lineage>
</organism>
<reference key="1">
    <citation type="submission" date="2008-10" db="EMBL/GenBank/DDBJ databases">
        <title>Genome sequence of Bacillus cereus G9842.</title>
        <authorList>
            <person name="Dodson R.J."/>
            <person name="Durkin A.S."/>
            <person name="Rosovitz M.J."/>
            <person name="Rasko D.A."/>
            <person name="Hoffmaster A."/>
            <person name="Ravel J."/>
            <person name="Sutton G."/>
        </authorList>
    </citation>
    <scope>NUCLEOTIDE SEQUENCE [LARGE SCALE GENOMIC DNA]</scope>
    <source>
        <strain>G9842</strain>
    </source>
</reference>
<dbReference type="EMBL" id="CP001186">
    <property type="protein sequence ID" value="ACK94286.1"/>
    <property type="molecule type" value="Genomic_DNA"/>
</dbReference>
<dbReference type="RefSeq" id="WP_001233781.1">
    <property type="nucleotide sequence ID" value="NC_011772.1"/>
</dbReference>
<dbReference type="SMR" id="B7IS18"/>
<dbReference type="GeneID" id="92798527"/>
<dbReference type="KEGG" id="bcg:BCG9842_B5334"/>
<dbReference type="HOGENOM" id="CLU_113441_5_3_9"/>
<dbReference type="Proteomes" id="UP000006744">
    <property type="component" value="Chromosome"/>
</dbReference>
<dbReference type="GO" id="GO:0005737">
    <property type="term" value="C:cytoplasm"/>
    <property type="evidence" value="ECO:0007669"/>
    <property type="project" value="UniProtKB-ARBA"/>
</dbReference>
<dbReference type="GO" id="GO:1990904">
    <property type="term" value="C:ribonucleoprotein complex"/>
    <property type="evidence" value="ECO:0007669"/>
    <property type="project" value="UniProtKB-KW"/>
</dbReference>
<dbReference type="GO" id="GO:0005840">
    <property type="term" value="C:ribosome"/>
    <property type="evidence" value="ECO:0007669"/>
    <property type="project" value="UniProtKB-KW"/>
</dbReference>
<dbReference type="GO" id="GO:0070181">
    <property type="term" value="F:small ribosomal subunit rRNA binding"/>
    <property type="evidence" value="ECO:0007669"/>
    <property type="project" value="TreeGrafter"/>
</dbReference>
<dbReference type="GO" id="GO:0003735">
    <property type="term" value="F:structural constituent of ribosome"/>
    <property type="evidence" value="ECO:0007669"/>
    <property type="project" value="InterPro"/>
</dbReference>
<dbReference type="GO" id="GO:0006412">
    <property type="term" value="P:translation"/>
    <property type="evidence" value="ECO:0007669"/>
    <property type="project" value="UniProtKB-UniRule"/>
</dbReference>
<dbReference type="CDD" id="cd00473">
    <property type="entry name" value="bS6"/>
    <property type="match status" value="1"/>
</dbReference>
<dbReference type="FunFam" id="3.30.70.60:FF:000002">
    <property type="entry name" value="30S ribosomal protein S6"/>
    <property type="match status" value="1"/>
</dbReference>
<dbReference type="Gene3D" id="3.30.70.60">
    <property type="match status" value="1"/>
</dbReference>
<dbReference type="HAMAP" id="MF_00360">
    <property type="entry name" value="Ribosomal_bS6"/>
    <property type="match status" value="1"/>
</dbReference>
<dbReference type="InterPro" id="IPR000529">
    <property type="entry name" value="Ribosomal_bS6"/>
</dbReference>
<dbReference type="InterPro" id="IPR020815">
    <property type="entry name" value="Ribosomal_bS6_CS"/>
</dbReference>
<dbReference type="InterPro" id="IPR035980">
    <property type="entry name" value="Ribosomal_bS6_sf"/>
</dbReference>
<dbReference type="InterPro" id="IPR020814">
    <property type="entry name" value="Ribosomal_S6_plastid/chlpt"/>
</dbReference>
<dbReference type="InterPro" id="IPR014717">
    <property type="entry name" value="Transl_elong_EF1B/ribsomal_bS6"/>
</dbReference>
<dbReference type="NCBIfam" id="TIGR00166">
    <property type="entry name" value="S6"/>
    <property type="match status" value="1"/>
</dbReference>
<dbReference type="PANTHER" id="PTHR21011">
    <property type="entry name" value="MITOCHONDRIAL 28S RIBOSOMAL PROTEIN S6"/>
    <property type="match status" value="1"/>
</dbReference>
<dbReference type="PANTHER" id="PTHR21011:SF1">
    <property type="entry name" value="SMALL RIBOSOMAL SUBUNIT PROTEIN BS6M"/>
    <property type="match status" value="1"/>
</dbReference>
<dbReference type="Pfam" id="PF01250">
    <property type="entry name" value="Ribosomal_S6"/>
    <property type="match status" value="1"/>
</dbReference>
<dbReference type="SUPFAM" id="SSF54995">
    <property type="entry name" value="Ribosomal protein S6"/>
    <property type="match status" value="1"/>
</dbReference>
<dbReference type="PROSITE" id="PS01048">
    <property type="entry name" value="RIBOSOMAL_S6"/>
    <property type="match status" value="1"/>
</dbReference>
<evidence type="ECO:0000255" key="1">
    <source>
        <dbReference type="HAMAP-Rule" id="MF_00360"/>
    </source>
</evidence>
<evidence type="ECO:0000305" key="2"/>
<name>RS6_BACC2</name>
<gene>
    <name evidence="1" type="primary">rpsF</name>
    <name type="ordered locus">BCG9842_B5334</name>
</gene>
<protein>
    <recommendedName>
        <fullName evidence="1">Small ribosomal subunit protein bS6</fullName>
    </recommendedName>
    <alternativeName>
        <fullName evidence="2">30S ribosomal protein S6</fullName>
    </alternativeName>
</protein>
<keyword id="KW-0687">Ribonucleoprotein</keyword>
<keyword id="KW-0689">Ribosomal protein</keyword>
<keyword id="KW-0694">RNA-binding</keyword>
<keyword id="KW-0699">rRNA-binding</keyword>
<proteinExistence type="inferred from homology"/>
<accession>B7IS18</accession>